<name>RS3_ACIB3</name>
<accession>B7GW08</accession>
<gene>
    <name evidence="1" type="primary">rpsC</name>
    <name type="ordered locus">ABBFA_000438</name>
</gene>
<keyword id="KW-0687">Ribonucleoprotein</keyword>
<keyword id="KW-0689">Ribosomal protein</keyword>
<keyword id="KW-0694">RNA-binding</keyword>
<keyword id="KW-0699">rRNA-binding</keyword>
<dbReference type="EMBL" id="CP001172">
    <property type="protein sequence ID" value="ACJ58162.1"/>
    <property type="molecule type" value="Genomic_DNA"/>
</dbReference>
<dbReference type="SMR" id="B7GW08"/>
<dbReference type="HOGENOM" id="CLU_058591_0_2_6"/>
<dbReference type="Proteomes" id="UP000006924">
    <property type="component" value="Chromosome"/>
</dbReference>
<dbReference type="GO" id="GO:0022627">
    <property type="term" value="C:cytosolic small ribosomal subunit"/>
    <property type="evidence" value="ECO:0007669"/>
    <property type="project" value="TreeGrafter"/>
</dbReference>
<dbReference type="GO" id="GO:0003729">
    <property type="term" value="F:mRNA binding"/>
    <property type="evidence" value="ECO:0007669"/>
    <property type="project" value="UniProtKB-UniRule"/>
</dbReference>
<dbReference type="GO" id="GO:0019843">
    <property type="term" value="F:rRNA binding"/>
    <property type="evidence" value="ECO:0007669"/>
    <property type="project" value="UniProtKB-UniRule"/>
</dbReference>
<dbReference type="GO" id="GO:0003735">
    <property type="term" value="F:structural constituent of ribosome"/>
    <property type="evidence" value="ECO:0007669"/>
    <property type="project" value="InterPro"/>
</dbReference>
<dbReference type="GO" id="GO:0006412">
    <property type="term" value="P:translation"/>
    <property type="evidence" value="ECO:0007669"/>
    <property type="project" value="UniProtKB-UniRule"/>
</dbReference>
<dbReference type="CDD" id="cd02412">
    <property type="entry name" value="KH-II_30S_S3"/>
    <property type="match status" value="1"/>
</dbReference>
<dbReference type="FunFam" id="3.30.1140.32:FF:000001">
    <property type="entry name" value="30S ribosomal protein S3"/>
    <property type="match status" value="1"/>
</dbReference>
<dbReference type="FunFam" id="3.30.300.20:FF:000001">
    <property type="entry name" value="30S ribosomal protein S3"/>
    <property type="match status" value="1"/>
</dbReference>
<dbReference type="Gene3D" id="3.30.300.20">
    <property type="match status" value="1"/>
</dbReference>
<dbReference type="Gene3D" id="3.30.1140.32">
    <property type="entry name" value="Ribosomal protein S3, C-terminal domain"/>
    <property type="match status" value="1"/>
</dbReference>
<dbReference type="HAMAP" id="MF_01309_B">
    <property type="entry name" value="Ribosomal_uS3_B"/>
    <property type="match status" value="1"/>
</dbReference>
<dbReference type="InterPro" id="IPR004087">
    <property type="entry name" value="KH_dom"/>
</dbReference>
<dbReference type="InterPro" id="IPR015946">
    <property type="entry name" value="KH_dom-like_a/b"/>
</dbReference>
<dbReference type="InterPro" id="IPR004044">
    <property type="entry name" value="KH_dom_type_2"/>
</dbReference>
<dbReference type="InterPro" id="IPR009019">
    <property type="entry name" value="KH_sf_prok-type"/>
</dbReference>
<dbReference type="InterPro" id="IPR036419">
    <property type="entry name" value="Ribosomal_S3_C_sf"/>
</dbReference>
<dbReference type="InterPro" id="IPR005704">
    <property type="entry name" value="Ribosomal_uS3_bac-typ"/>
</dbReference>
<dbReference type="InterPro" id="IPR001351">
    <property type="entry name" value="Ribosomal_uS3_C"/>
</dbReference>
<dbReference type="InterPro" id="IPR018280">
    <property type="entry name" value="Ribosomal_uS3_CS"/>
</dbReference>
<dbReference type="NCBIfam" id="TIGR01009">
    <property type="entry name" value="rpsC_bact"/>
    <property type="match status" value="1"/>
</dbReference>
<dbReference type="PANTHER" id="PTHR11760">
    <property type="entry name" value="30S/40S RIBOSOMAL PROTEIN S3"/>
    <property type="match status" value="1"/>
</dbReference>
<dbReference type="PANTHER" id="PTHR11760:SF19">
    <property type="entry name" value="SMALL RIBOSOMAL SUBUNIT PROTEIN US3C"/>
    <property type="match status" value="1"/>
</dbReference>
<dbReference type="Pfam" id="PF07650">
    <property type="entry name" value="KH_2"/>
    <property type="match status" value="1"/>
</dbReference>
<dbReference type="Pfam" id="PF00189">
    <property type="entry name" value="Ribosomal_S3_C"/>
    <property type="match status" value="1"/>
</dbReference>
<dbReference type="SMART" id="SM00322">
    <property type="entry name" value="KH"/>
    <property type="match status" value="1"/>
</dbReference>
<dbReference type="SUPFAM" id="SSF54814">
    <property type="entry name" value="Prokaryotic type KH domain (KH-domain type II)"/>
    <property type="match status" value="1"/>
</dbReference>
<dbReference type="SUPFAM" id="SSF54821">
    <property type="entry name" value="Ribosomal protein S3 C-terminal domain"/>
    <property type="match status" value="1"/>
</dbReference>
<dbReference type="PROSITE" id="PS50823">
    <property type="entry name" value="KH_TYPE_2"/>
    <property type="match status" value="1"/>
</dbReference>
<dbReference type="PROSITE" id="PS00548">
    <property type="entry name" value="RIBOSOMAL_S3"/>
    <property type="match status" value="1"/>
</dbReference>
<proteinExistence type="inferred from homology"/>
<feature type="chain" id="PRO_1000140912" description="Small ribosomal subunit protein uS3">
    <location>
        <begin position="1"/>
        <end position="250"/>
    </location>
</feature>
<feature type="domain" description="KH type-2" evidence="1">
    <location>
        <begin position="39"/>
        <end position="107"/>
    </location>
</feature>
<feature type="region of interest" description="Disordered" evidence="2">
    <location>
        <begin position="215"/>
        <end position="250"/>
    </location>
</feature>
<feature type="compositionally biased region" description="Basic and acidic residues" evidence="2">
    <location>
        <begin position="220"/>
        <end position="250"/>
    </location>
</feature>
<reference key="1">
    <citation type="journal article" date="2008" name="J. Bacteriol.">
        <title>Comparative genome sequence analysis of multidrug-resistant Acinetobacter baumannii.</title>
        <authorList>
            <person name="Adams M.D."/>
            <person name="Goglin K."/>
            <person name="Molyneaux N."/>
            <person name="Hujer K.M."/>
            <person name="Lavender H."/>
            <person name="Jamison J.J."/>
            <person name="MacDonald I.J."/>
            <person name="Martin K.M."/>
            <person name="Russo T."/>
            <person name="Campagnari A.A."/>
            <person name="Hujer A.M."/>
            <person name="Bonomo R.A."/>
            <person name="Gill S.R."/>
        </authorList>
    </citation>
    <scope>NUCLEOTIDE SEQUENCE [LARGE SCALE GENOMIC DNA]</scope>
    <source>
        <strain>AB307-0294</strain>
    </source>
</reference>
<comment type="function">
    <text evidence="1">Binds the lower part of the 30S subunit head. Binds mRNA in the 70S ribosome, positioning it for translation.</text>
</comment>
<comment type="subunit">
    <text evidence="1">Part of the 30S ribosomal subunit. Forms a tight complex with proteins S10 and S14.</text>
</comment>
<comment type="similarity">
    <text evidence="1">Belongs to the universal ribosomal protein uS3 family.</text>
</comment>
<evidence type="ECO:0000255" key="1">
    <source>
        <dbReference type="HAMAP-Rule" id="MF_01309"/>
    </source>
</evidence>
<evidence type="ECO:0000256" key="2">
    <source>
        <dbReference type="SAM" id="MobiDB-lite"/>
    </source>
</evidence>
<evidence type="ECO:0000305" key="3"/>
<sequence length="250" mass="27921">MGQKVHPIGIRLGVVKRHNANWYANPKQYAEYLLKDLQVREFLTKKLKNAMVSNILIERPSGAAKVTISTARPGIVIGKKGEDIEKLQRELTNIMGVPAQVSINEIDRPDLDARLVAEAIASQLEKRVMFRRAMKRAVQNTMRAGAKGIKVEVSGRLGGAEIARTEWYREGRVPLHTLRADIDYATMRAETTYGTIGVKVWIFRGEILGGMKQVMNPAPAEERPAKRGRGRGEGQERRGRRGDRAADKGE</sequence>
<protein>
    <recommendedName>
        <fullName evidence="1">Small ribosomal subunit protein uS3</fullName>
    </recommendedName>
    <alternativeName>
        <fullName evidence="3">30S ribosomal protein S3</fullName>
    </alternativeName>
</protein>
<organism>
    <name type="scientific">Acinetobacter baumannii (strain AB307-0294)</name>
    <dbReference type="NCBI Taxonomy" id="557600"/>
    <lineage>
        <taxon>Bacteria</taxon>
        <taxon>Pseudomonadati</taxon>
        <taxon>Pseudomonadota</taxon>
        <taxon>Gammaproteobacteria</taxon>
        <taxon>Moraxellales</taxon>
        <taxon>Moraxellaceae</taxon>
        <taxon>Acinetobacter</taxon>
        <taxon>Acinetobacter calcoaceticus/baumannii complex</taxon>
    </lineage>
</organism>